<name>FPPS_MAIZE</name>
<sequence>MAAGGNGAGGDTRAAFARIYKTLKEELLTDPAFEFTEESRQWIDRMVDYNVLGGKCNRGLSVVDSYKLLKGADALGEEETFLACTLGWCIEWLQAFFLVLDDIMDDSHTRRGQPCWFRVPQVGLIAANDGIILRNHISRILRRHFKGKPYYADLLDLFNEVEFKTASGQLLDLITTHEGEKDLTKYNITVHGRIVQYKTAYYSFYLPVACALLLSGENLDNYGDVENILVEMGTYFQVQDDYLDCYGDPEFIGKIGTDIEDYKCSWLVVQALERADESQKRILFENYGKKDPACVAKVKNLYKELDLEAVFQEYENESYKKLIADIEAQPSIAVQKVLKSFLHKIYKRQK</sequence>
<keyword id="KW-0152">Cholesterol biosynthesis</keyword>
<keyword id="KW-0153">Cholesterol metabolism</keyword>
<keyword id="KW-0963">Cytoplasm</keyword>
<keyword id="KW-0414">Isoprene biosynthesis</keyword>
<keyword id="KW-0444">Lipid biosynthesis</keyword>
<keyword id="KW-0443">Lipid metabolism</keyword>
<keyword id="KW-0460">Magnesium</keyword>
<keyword id="KW-0479">Metal-binding</keyword>
<keyword id="KW-1185">Reference proteome</keyword>
<keyword id="KW-0752">Steroid biosynthesis</keyword>
<keyword id="KW-0753">Steroid metabolism</keyword>
<keyword id="KW-0756">Sterol biosynthesis</keyword>
<keyword id="KW-1207">Sterol metabolism</keyword>
<keyword id="KW-0808">Transferase</keyword>
<protein>
    <recommendedName>
        <fullName>Farnesyl pyrophosphate synthase</fullName>
        <shortName>FPP synthase</shortName>
        <shortName>FPS</shortName>
        <ecNumber>2.5.1.10</ecNumber>
    </recommendedName>
    <alternativeName>
        <fullName>(2E,6E)-farnesyl diphosphate synthase</fullName>
    </alternativeName>
    <alternativeName>
        <fullName>Dimethylallyltranstransferase</fullName>
        <ecNumber>2.5.1.1</ecNumber>
    </alternativeName>
    <alternativeName>
        <fullName>Farnesyl diphosphate synthase</fullName>
    </alternativeName>
    <alternativeName>
        <fullName>Geranyltranstransferase</fullName>
    </alternativeName>
</protein>
<dbReference type="EC" id="2.5.1.10"/>
<dbReference type="EC" id="2.5.1.1"/>
<dbReference type="EMBL" id="L39789">
    <property type="protein sequence ID" value="AAB39276.1"/>
    <property type="molecule type" value="mRNA"/>
</dbReference>
<dbReference type="PIR" id="T03291">
    <property type="entry name" value="T03291"/>
</dbReference>
<dbReference type="RefSeq" id="NP_001105039.1">
    <property type="nucleotide sequence ID" value="NM_001111569.1"/>
</dbReference>
<dbReference type="SMR" id="P49353"/>
<dbReference type="STRING" id="4577.P49353"/>
<dbReference type="PaxDb" id="4577-GRMZM2G168681_P01"/>
<dbReference type="EnsemblPlants" id="Zm00001eb342550_T002">
    <property type="protein sequence ID" value="Zm00001eb342550_P002"/>
    <property type="gene ID" value="Zm00001eb342550"/>
</dbReference>
<dbReference type="GeneID" id="541903"/>
<dbReference type="Gramene" id="Zm00001eb342550_T002">
    <property type="protein sequence ID" value="Zm00001eb342550_P002"/>
    <property type="gene ID" value="Zm00001eb342550"/>
</dbReference>
<dbReference type="KEGG" id="zma:541903"/>
<dbReference type="MaizeGDB" id="86802"/>
<dbReference type="eggNOG" id="KOG0711">
    <property type="taxonomic scope" value="Eukaryota"/>
</dbReference>
<dbReference type="HOGENOM" id="CLU_028376_3_0_1"/>
<dbReference type="InParanoid" id="P49353"/>
<dbReference type="OrthoDB" id="10257492at2759"/>
<dbReference type="UniPathway" id="UPA00259">
    <property type="reaction ID" value="UER00368"/>
</dbReference>
<dbReference type="UniPathway" id="UPA00260">
    <property type="reaction ID" value="UER00369"/>
</dbReference>
<dbReference type="Proteomes" id="UP000007305">
    <property type="component" value="Chromosome 8"/>
</dbReference>
<dbReference type="ExpressionAtlas" id="P49353">
    <property type="expression patterns" value="baseline and differential"/>
</dbReference>
<dbReference type="GO" id="GO:0005737">
    <property type="term" value="C:cytoplasm"/>
    <property type="evidence" value="ECO:0000318"/>
    <property type="project" value="GO_Central"/>
</dbReference>
<dbReference type="GO" id="GO:0004337">
    <property type="term" value="F:(2E,6E)-farnesyl diphosphate synthase activity"/>
    <property type="evidence" value="ECO:0000318"/>
    <property type="project" value="GO_Central"/>
</dbReference>
<dbReference type="GO" id="GO:0004161">
    <property type="term" value="F:dimethylallyltranstransferase activity"/>
    <property type="evidence" value="ECO:0000318"/>
    <property type="project" value="GO_Central"/>
</dbReference>
<dbReference type="GO" id="GO:0046872">
    <property type="term" value="F:metal ion binding"/>
    <property type="evidence" value="ECO:0007669"/>
    <property type="project" value="UniProtKB-KW"/>
</dbReference>
<dbReference type="GO" id="GO:0006695">
    <property type="term" value="P:cholesterol biosynthetic process"/>
    <property type="evidence" value="ECO:0007669"/>
    <property type="project" value="UniProtKB-KW"/>
</dbReference>
<dbReference type="GO" id="GO:0045337">
    <property type="term" value="P:farnesyl diphosphate biosynthetic process"/>
    <property type="evidence" value="ECO:0000318"/>
    <property type="project" value="GO_Central"/>
</dbReference>
<dbReference type="GO" id="GO:0033384">
    <property type="term" value="P:geranyl diphosphate biosynthetic process"/>
    <property type="evidence" value="ECO:0007669"/>
    <property type="project" value="UniProtKB-UniPathway"/>
</dbReference>
<dbReference type="CDD" id="cd00685">
    <property type="entry name" value="Trans_IPPS_HT"/>
    <property type="match status" value="1"/>
</dbReference>
<dbReference type="FunFam" id="1.10.600.10:FF:000008">
    <property type="entry name" value="Farnesyl pyrophosphate synthase"/>
    <property type="match status" value="1"/>
</dbReference>
<dbReference type="Gene3D" id="1.10.600.10">
    <property type="entry name" value="Farnesyl Diphosphate Synthase"/>
    <property type="match status" value="1"/>
</dbReference>
<dbReference type="InterPro" id="IPR039702">
    <property type="entry name" value="FPS1-like"/>
</dbReference>
<dbReference type="InterPro" id="IPR008949">
    <property type="entry name" value="Isoprenoid_synthase_dom_sf"/>
</dbReference>
<dbReference type="InterPro" id="IPR000092">
    <property type="entry name" value="Polyprenyl_synt"/>
</dbReference>
<dbReference type="InterPro" id="IPR033749">
    <property type="entry name" value="Polyprenyl_synt_CS"/>
</dbReference>
<dbReference type="PANTHER" id="PTHR11525:SF11">
    <property type="entry name" value="FARNESYL PYROPHOSPHATE SYNTHASE"/>
    <property type="match status" value="1"/>
</dbReference>
<dbReference type="PANTHER" id="PTHR11525">
    <property type="entry name" value="FARNESYL-PYROPHOSPHATE SYNTHETASE"/>
    <property type="match status" value="1"/>
</dbReference>
<dbReference type="Pfam" id="PF00348">
    <property type="entry name" value="polyprenyl_synt"/>
    <property type="match status" value="1"/>
</dbReference>
<dbReference type="SFLD" id="SFLDS00005">
    <property type="entry name" value="Isoprenoid_Synthase_Type_I"/>
    <property type="match status" value="1"/>
</dbReference>
<dbReference type="SFLD" id="SFLDG01017">
    <property type="entry name" value="Polyprenyl_Transferase_Like"/>
    <property type="match status" value="1"/>
</dbReference>
<dbReference type="SUPFAM" id="SSF48576">
    <property type="entry name" value="Terpenoid synthases"/>
    <property type="match status" value="1"/>
</dbReference>
<dbReference type="PROSITE" id="PS00723">
    <property type="entry name" value="POLYPRENYL_SYNTHASE_1"/>
    <property type="match status" value="1"/>
</dbReference>
<dbReference type="PROSITE" id="PS00444">
    <property type="entry name" value="POLYPRENYL_SYNTHASE_2"/>
    <property type="match status" value="1"/>
</dbReference>
<gene>
    <name type="primary">FPS</name>
</gene>
<comment type="function">
    <text>Catalyzes the sequential condensation of isopentenyl pyrophosphate with the allylic pyrophosphates, dimethylallyl pyrophosphate, and then with the resultant geranylpyrophosphate to the ultimate product farnesyl pyrophosphate.</text>
</comment>
<comment type="catalytic activity">
    <reaction>
        <text>isopentenyl diphosphate + dimethylallyl diphosphate = (2E)-geranyl diphosphate + diphosphate</text>
        <dbReference type="Rhea" id="RHEA:22408"/>
        <dbReference type="ChEBI" id="CHEBI:33019"/>
        <dbReference type="ChEBI" id="CHEBI:57623"/>
        <dbReference type="ChEBI" id="CHEBI:58057"/>
        <dbReference type="ChEBI" id="CHEBI:128769"/>
        <dbReference type="EC" id="2.5.1.1"/>
    </reaction>
</comment>
<comment type="catalytic activity">
    <reaction>
        <text>isopentenyl diphosphate + (2E)-geranyl diphosphate = (2E,6E)-farnesyl diphosphate + diphosphate</text>
        <dbReference type="Rhea" id="RHEA:19361"/>
        <dbReference type="ChEBI" id="CHEBI:33019"/>
        <dbReference type="ChEBI" id="CHEBI:58057"/>
        <dbReference type="ChEBI" id="CHEBI:128769"/>
        <dbReference type="ChEBI" id="CHEBI:175763"/>
        <dbReference type="EC" id="2.5.1.10"/>
    </reaction>
</comment>
<comment type="cofactor">
    <cofactor evidence="1">
        <name>Mg(2+)</name>
        <dbReference type="ChEBI" id="CHEBI:18420"/>
    </cofactor>
    <text evidence="1">Binds 2 Mg(2+) ions per subunit.</text>
</comment>
<comment type="pathway">
    <text>Isoprenoid biosynthesis; farnesyl diphosphate biosynthesis; farnesyl diphosphate from geranyl diphosphate and isopentenyl diphosphate: step 1/1.</text>
</comment>
<comment type="pathway">
    <text>Isoprenoid biosynthesis; geranyl diphosphate biosynthesis; geranyl diphosphate from dimethylallyl diphosphate and isopentenyl diphosphate: step 1/1.</text>
</comment>
<comment type="subcellular location">
    <subcellularLocation>
        <location evidence="1">Cytoplasm</location>
    </subcellularLocation>
</comment>
<comment type="similarity">
    <text evidence="3">Belongs to the FPP/GGPP synthase family.</text>
</comment>
<organism>
    <name type="scientific">Zea mays</name>
    <name type="common">Maize</name>
    <dbReference type="NCBI Taxonomy" id="4577"/>
    <lineage>
        <taxon>Eukaryota</taxon>
        <taxon>Viridiplantae</taxon>
        <taxon>Streptophyta</taxon>
        <taxon>Embryophyta</taxon>
        <taxon>Tracheophyta</taxon>
        <taxon>Spermatophyta</taxon>
        <taxon>Magnoliopsida</taxon>
        <taxon>Liliopsida</taxon>
        <taxon>Poales</taxon>
        <taxon>Poaceae</taxon>
        <taxon>PACMAD clade</taxon>
        <taxon>Panicoideae</taxon>
        <taxon>Andropogonodae</taxon>
        <taxon>Andropogoneae</taxon>
        <taxon>Tripsacinae</taxon>
        <taxon>Zea</taxon>
    </lineage>
</organism>
<proteinExistence type="evidence at transcript level"/>
<feature type="chain" id="PRO_0000123958" description="Farnesyl pyrophosphate synthase">
    <location>
        <begin position="1"/>
        <end position="350"/>
    </location>
</feature>
<feature type="binding site" evidence="2">
    <location>
        <position position="55"/>
    </location>
    <ligand>
        <name>isopentenyl diphosphate</name>
        <dbReference type="ChEBI" id="CHEBI:128769"/>
    </ligand>
</feature>
<feature type="binding site" evidence="2">
    <location>
        <position position="58"/>
    </location>
    <ligand>
        <name>isopentenyl diphosphate</name>
        <dbReference type="ChEBI" id="CHEBI:128769"/>
    </ligand>
</feature>
<feature type="binding site" evidence="2">
    <location>
        <position position="94"/>
    </location>
    <ligand>
        <name>isopentenyl diphosphate</name>
        <dbReference type="ChEBI" id="CHEBI:128769"/>
    </ligand>
</feature>
<feature type="binding site" evidence="2">
    <location>
        <position position="101"/>
    </location>
    <ligand>
        <name>Mg(2+)</name>
        <dbReference type="ChEBI" id="CHEBI:18420"/>
        <label>1</label>
    </ligand>
</feature>
<feature type="binding site" evidence="2">
    <location>
        <position position="101"/>
    </location>
    <ligand>
        <name>Mg(2+)</name>
        <dbReference type="ChEBI" id="CHEBI:18420"/>
        <label>2</label>
    </ligand>
</feature>
<feature type="binding site" evidence="2">
    <location>
        <position position="105"/>
    </location>
    <ligand>
        <name>Mg(2+)</name>
        <dbReference type="ChEBI" id="CHEBI:18420"/>
        <label>1</label>
    </ligand>
</feature>
<feature type="binding site" evidence="2">
    <location>
        <position position="105"/>
    </location>
    <ligand>
        <name>Mg(2+)</name>
        <dbReference type="ChEBI" id="CHEBI:18420"/>
        <label>2</label>
    </ligand>
</feature>
<feature type="binding site" evidence="1">
    <location>
        <position position="110"/>
    </location>
    <ligand>
        <name>dimethylallyl diphosphate</name>
        <dbReference type="ChEBI" id="CHEBI:57623"/>
    </ligand>
</feature>
<feature type="binding site" evidence="2">
    <location>
        <position position="111"/>
    </location>
    <ligand>
        <name>isopentenyl diphosphate</name>
        <dbReference type="ChEBI" id="CHEBI:128769"/>
    </ligand>
</feature>
<feature type="binding site" evidence="1">
    <location>
        <position position="198"/>
    </location>
    <ligand>
        <name>dimethylallyl diphosphate</name>
        <dbReference type="ChEBI" id="CHEBI:57623"/>
    </ligand>
</feature>
<feature type="binding site" evidence="1">
    <location>
        <position position="199"/>
    </location>
    <ligand>
        <name>dimethylallyl diphosphate</name>
        <dbReference type="ChEBI" id="CHEBI:57623"/>
    </ligand>
</feature>
<feature type="binding site" evidence="1">
    <location>
        <position position="237"/>
    </location>
    <ligand>
        <name>dimethylallyl diphosphate</name>
        <dbReference type="ChEBI" id="CHEBI:57623"/>
    </ligand>
</feature>
<feature type="binding site" evidence="1">
    <location>
        <position position="254"/>
    </location>
    <ligand>
        <name>dimethylallyl diphosphate</name>
        <dbReference type="ChEBI" id="CHEBI:57623"/>
    </ligand>
</feature>
<feature type="binding site" evidence="1">
    <location>
        <position position="263"/>
    </location>
    <ligand>
        <name>dimethylallyl diphosphate</name>
        <dbReference type="ChEBI" id="CHEBI:57623"/>
    </ligand>
</feature>
<evidence type="ECO:0000250" key="1"/>
<evidence type="ECO:0000250" key="2">
    <source>
        <dbReference type="UniProtKB" id="P14324"/>
    </source>
</evidence>
<evidence type="ECO:0000305" key="3"/>
<accession>P49353</accession>
<reference key="1">
    <citation type="journal article" date="1996" name="Gene">
        <title>Identification of a maize endosperm-specific cDNA encoding farnesyl pyrophosphate synthetase.</title>
        <authorList>
            <person name="Li C.P."/>
            <person name="Larkins B.A."/>
        </authorList>
    </citation>
    <scope>NUCLEOTIDE SEQUENCE [MRNA]</scope>
    <source>
        <strain>cv. Wisconsin 64A</strain>
        <tissue>Endosperm</tissue>
    </source>
</reference>